<accession>A4SHP4</accession>
<sequence>MAFNLRNRNFLKLLDFTPREIQYMIDLAIDLKKAKYGGYERKHLTGKNIALIFEKTSTRTRCAFEVAAFDQGAQVSYLGPSGSQIGHKESMKDTARVLGRMYDGIEYRGYGQEIVEELGAYAGVPVWNGLTNEFHPTQILADFMTMLEHGKGKRLDQIKFAYLGDARNNMGNSLMVGAAKMGMDIRLVAPKAFWPEEDLVAKCRLIAEETGACITLTEDVKEGVLGTDFLYTDVWVSMGEAKEAWDQRVKLMTPYQINMDVINATKNPDVKFMHCLPAFHNDETTMGKEVADKYGMKGLEVTEDVFESEHSIVFDEAENRMHTIKAVMVATLGD</sequence>
<name>OTC_AERS4</name>
<comment type="function">
    <text evidence="1">Reversibly catalyzes the transfer of the carbamoyl group from carbamoyl phosphate (CP) to the N(epsilon) atom of ornithine (ORN) to produce L-citrulline.</text>
</comment>
<comment type="catalytic activity">
    <reaction evidence="2">
        <text>carbamoyl phosphate + L-ornithine = L-citrulline + phosphate + H(+)</text>
        <dbReference type="Rhea" id="RHEA:19513"/>
        <dbReference type="ChEBI" id="CHEBI:15378"/>
        <dbReference type="ChEBI" id="CHEBI:43474"/>
        <dbReference type="ChEBI" id="CHEBI:46911"/>
        <dbReference type="ChEBI" id="CHEBI:57743"/>
        <dbReference type="ChEBI" id="CHEBI:58228"/>
        <dbReference type="EC" id="2.1.3.3"/>
    </reaction>
</comment>
<comment type="pathway">
    <text evidence="2">Amino-acid biosynthesis; L-arginine biosynthesis; L-arginine from L-ornithine and carbamoyl phosphate: step 1/3.</text>
</comment>
<comment type="subcellular location">
    <subcellularLocation>
        <location evidence="2">Cytoplasm</location>
    </subcellularLocation>
</comment>
<comment type="similarity">
    <text evidence="2">Belongs to the aspartate/ornithine carbamoyltransferase superfamily. OTCase family.</text>
</comment>
<feature type="chain" id="PRO_1000065072" description="Ornithine carbamoyltransferase">
    <location>
        <begin position="1"/>
        <end position="334"/>
    </location>
</feature>
<feature type="binding site" evidence="2">
    <location>
        <begin position="57"/>
        <end position="60"/>
    </location>
    <ligand>
        <name>carbamoyl phosphate</name>
        <dbReference type="ChEBI" id="CHEBI:58228"/>
    </ligand>
</feature>
<feature type="binding site" evidence="2">
    <location>
        <position position="84"/>
    </location>
    <ligand>
        <name>carbamoyl phosphate</name>
        <dbReference type="ChEBI" id="CHEBI:58228"/>
    </ligand>
</feature>
<feature type="binding site" evidence="2">
    <location>
        <position position="108"/>
    </location>
    <ligand>
        <name>carbamoyl phosphate</name>
        <dbReference type="ChEBI" id="CHEBI:58228"/>
    </ligand>
</feature>
<feature type="binding site" evidence="2">
    <location>
        <begin position="135"/>
        <end position="138"/>
    </location>
    <ligand>
        <name>carbamoyl phosphate</name>
        <dbReference type="ChEBI" id="CHEBI:58228"/>
    </ligand>
</feature>
<feature type="binding site" evidence="2">
    <location>
        <position position="169"/>
    </location>
    <ligand>
        <name>L-ornithine</name>
        <dbReference type="ChEBI" id="CHEBI:46911"/>
    </ligand>
</feature>
<feature type="binding site" evidence="2">
    <location>
        <position position="233"/>
    </location>
    <ligand>
        <name>L-ornithine</name>
        <dbReference type="ChEBI" id="CHEBI:46911"/>
    </ligand>
</feature>
<feature type="binding site" evidence="2">
    <location>
        <begin position="237"/>
        <end position="238"/>
    </location>
    <ligand>
        <name>L-ornithine</name>
        <dbReference type="ChEBI" id="CHEBI:46911"/>
    </ligand>
</feature>
<feature type="binding site" evidence="2">
    <location>
        <begin position="275"/>
        <end position="276"/>
    </location>
    <ligand>
        <name>carbamoyl phosphate</name>
        <dbReference type="ChEBI" id="CHEBI:58228"/>
    </ligand>
</feature>
<feature type="binding site" evidence="2">
    <location>
        <position position="320"/>
    </location>
    <ligand>
        <name>carbamoyl phosphate</name>
        <dbReference type="ChEBI" id="CHEBI:58228"/>
    </ligand>
</feature>
<evidence type="ECO:0000250" key="1"/>
<evidence type="ECO:0000255" key="2">
    <source>
        <dbReference type="HAMAP-Rule" id="MF_01109"/>
    </source>
</evidence>
<proteinExistence type="inferred from homology"/>
<dbReference type="EC" id="2.1.3.3" evidence="2"/>
<dbReference type="EMBL" id="CP000644">
    <property type="protein sequence ID" value="ABO88416.1"/>
    <property type="molecule type" value="Genomic_DNA"/>
</dbReference>
<dbReference type="RefSeq" id="WP_005318430.1">
    <property type="nucleotide sequence ID" value="NC_009348.1"/>
</dbReference>
<dbReference type="SMR" id="A4SHP4"/>
<dbReference type="STRING" id="29491.GCA_000820065_01298"/>
<dbReference type="KEGG" id="asa:ASA_0224"/>
<dbReference type="eggNOG" id="COG0078">
    <property type="taxonomic scope" value="Bacteria"/>
</dbReference>
<dbReference type="HOGENOM" id="CLU_043846_3_1_6"/>
<dbReference type="UniPathway" id="UPA00068">
    <property type="reaction ID" value="UER00112"/>
</dbReference>
<dbReference type="Proteomes" id="UP000000225">
    <property type="component" value="Chromosome"/>
</dbReference>
<dbReference type="GO" id="GO:0005737">
    <property type="term" value="C:cytoplasm"/>
    <property type="evidence" value="ECO:0007669"/>
    <property type="project" value="UniProtKB-SubCell"/>
</dbReference>
<dbReference type="GO" id="GO:0016597">
    <property type="term" value="F:amino acid binding"/>
    <property type="evidence" value="ECO:0007669"/>
    <property type="project" value="InterPro"/>
</dbReference>
<dbReference type="GO" id="GO:0004585">
    <property type="term" value="F:ornithine carbamoyltransferase activity"/>
    <property type="evidence" value="ECO:0007669"/>
    <property type="project" value="UniProtKB-UniRule"/>
</dbReference>
<dbReference type="GO" id="GO:0042450">
    <property type="term" value="P:arginine biosynthetic process via ornithine"/>
    <property type="evidence" value="ECO:0007669"/>
    <property type="project" value="TreeGrafter"/>
</dbReference>
<dbReference type="GO" id="GO:0019240">
    <property type="term" value="P:citrulline biosynthetic process"/>
    <property type="evidence" value="ECO:0007669"/>
    <property type="project" value="TreeGrafter"/>
</dbReference>
<dbReference type="GO" id="GO:0006526">
    <property type="term" value="P:L-arginine biosynthetic process"/>
    <property type="evidence" value="ECO:0007669"/>
    <property type="project" value="UniProtKB-UniRule"/>
</dbReference>
<dbReference type="FunFam" id="3.40.50.1370:FF:000004">
    <property type="entry name" value="Ornithine carbamoyltransferase"/>
    <property type="match status" value="1"/>
</dbReference>
<dbReference type="Gene3D" id="3.40.50.1370">
    <property type="entry name" value="Aspartate/ornithine carbamoyltransferase"/>
    <property type="match status" value="2"/>
</dbReference>
<dbReference type="HAMAP" id="MF_01109">
    <property type="entry name" value="OTCase"/>
    <property type="match status" value="1"/>
</dbReference>
<dbReference type="InterPro" id="IPR006132">
    <property type="entry name" value="Asp/Orn_carbamoyltranf_P-bd"/>
</dbReference>
<dbReference type="InterPro" id="IPR006130">
    <property type="entry name" value="Asp/Orn_carbamoylTrfase"/>
</dbReference>
<dbReference type="InterPro" id="IPR036901">
    <property type="entry name" value="Asp/Orn_carbamoylTrfase_sf"/>
</dbReference>
<dbReference type="InterPro" id="IPR006131">
    <property type="entry name" value="Asp_carbamoyltransf_Asp/Orn-bd"/>
</dbReference>
<dbReference type="InterPro" id="IPR002292">
    <property type="entry name" value="Orn/put_carbamltrans"/>
</dbReference>
<dbReference type="InterPro" id="IPR024904">
    <property type="entry name" value="OTCase_ArgI"/>
</dbReference>
<dbReference type="NCBIfam" id="TIGR00658">
    <property type="entry name" value="orni_carb_tr"/>
    <property type="match status" value="1"/>
</dbReference>
<dbReference type="NCBIfam" id="NF003286">
    <property type="entry name" value="PRK04284.1"/>
    <property type="match status" value="1"/>
</dbReference>
<dbReference type="PANTHER" id="PTHR45753:SF2">
    <property type="entry name" value="ORNITHINE CARBAMOYLTRANSFERASE"/>
    <property type="match status" value="1"/>
</dbReference>
<dbReference type="PANTHER" id="PTHR45753">
    <property type="entry name" value="ORNITHINE CARBAMOYLTRANSFERASE, MITOCHONDRIAL"/>
    <property type="match status" value="1"/>
</dbReference>
<dbReference type="Pfam" id="PF00185">
    <property type="entry name" value="OTCace"/>
    <property type="match status" value="1"/>
</dbReference>
<dbReference type="Pfam" id="PF02729">
    <property type="entry name" value="OTCace_N"/>
    <property type="match status" value="1"/>
</dbReference>
<dbReference type="PRINTS" id="PR00100">
    <property type="entry name" value="AOTCASE"/>
</dbReference>
<dbReference type="PRINTS" id="PR00102">
    <property type="entry name" value="OTCASE"/>
</dbReference>
<dbReference type="SUPFAM" id="SSF53671">
    <property type="entry name" value="Aspartate/ornithine carbamoyltransferase"/>
    <property type="match status" value="1"/>
</dbReference>
<dbReference type="PROSITE" id="PS00097">
    <property type="entry name" value="CARBAMOYLTRANSFERASE"/>
    <property type="match status" value="1"/>
</dbReference>
<protein>
    <recommendedName>
        <fullName evidence="2">Ornithine carbamoyltransferase</fullName>
        <shortName evidence="2">OTCase</shortName>
        <ecNumber evidence="2">2.1.3.3</ecNumber>
    </recommendedName>
</protein>
<keyword id="KW-0028">Amino-acid biosynthesis</keyword>
<keyword id="KW-0055">Arginine biosynthesis</keyword>
<keyword id="KW-0963">Cytoplasm</keyword>
<keyword id="KW-0808">Transferase</keyword>
<gene>
    <name evidence="2" type="primary">argF</name>
    <name type="ordered locus">ASA_0224</name>
</gene>
<organism>
    <name type="scientific">Aeromonas salmonicida (strain A449)</name>
    <dbReference type="NCBI Taxonomy" id="382245"/>
    <lineage>
        <taxon>Bacteria</taxon>
        <taxon>Pseudomonadati</taxon>
        <taxon>Pseudomonadota</taxon>
        <taxon>Gammaproteobacteria</taxon>
        <taxon>Aeromonadales</taxon>
        <taxon>Aeromonadaceae</taxon>
        <taxon>Aeromonas</taxon>
    </lineage>
</organism>
<reference key="1">
    <citation type="journal article" date="2008" name="BMC Genomics">
        <title>The genome of Aeromonas salmonicida subsp. salmonicida A449: insights into the evolution of a fish pathogen.</title>
        <authorList>
            <person name="Reith M.E."/>
            <person name="Singh R.K."/>
            <person name="Curtis B."/>
            <person name="Boyd J.M."/>
            <person name="Bouevitch A."/>
            <person name="Kimball J."/>
            <person name="Munholland J."/>
            <person name="Murphy C."/>
            <person name="Sarty D."/>
            <person name="Williams J."/>
            <person name="Nash J.H."/>
            <person name="Johnson S.C."/>
            <person name="Brown L.L."/>
        </authorList>
    </citation>
    <scope>NUCLEOTIDE SEQUENCE [LARGE SCALE GENOMIC DNA]</scope>
    <source>
        <strain>A449</strain>
    </source>
</reference>